<feature type="chain" id="PRO_0000220795" description="Uncharacterized protein UU063">
    <location>
        <begin position="1"/>
        <end position="158"/>
    </location>
</feature>
<dbReference type="EMBL" id="AF222894">
    <property type="protein sequence ID" value="AAF30468.1"/>
    <property type="molecule type" value="Genomic_DNA"/>
</dbReference>
<dbReference type="RefSeq" id="WP_006688445.1">
    <property type="nucleotide sequence ID" value="NC_002162.1"/>
</dbReference>
<dbReference type="SMR" id="Q9PR82"/>
<dbReference type="STRING" id="273119.UU063"/>
<dbReference type="EnsemblBacteria" id="AAF30468">
    <property type="protein sequence ID" value="AAF30468"/>
    <property type="gene ID" value="UU063"/>
</dbReference>
<dbReference type="GeneID" id="29672212"/>
<dbReference type="KEGG" id="uur:UU063"/>
<dbReference type="eggNOG" id="COG3613">
    <property type="taxonomic scope" value="Bacteria"/>
</dbReference>
<dbReference type="HOGENOM" id="CLU_1675915_0_0_14"/>
<dbReference type="Proteomes" id="UP000000423">
    <property type="component" value="Chromosome"/>
</dbReference>
<dbReference type="Gene3D" id="3.40.50.450">
    <property type="match status" value="1"/>
</dbReference>
<dbReference type="InterPro" id="IPR007710">
    <property type="entry name" value="Nucleoside_deoxyribTrfase"/>
</dbReference>
<dbReference type="Pfam" id="PF05014">
    <property type="entry name" value="Nuc_deoxyrib_tr"/>
    <property type="match status" value="1"/>
</dbReference>
<dbReference type="SUPFAM" id="SSF52309">
    <property type="entry name" value="N-(deoxy)ribosyltransferase-like"/>
    <property type="match status" value="1"/>
</dbReference>
<gene>
    <name type="ordered locus">UU063</name>
</gene>
<protein>
    <recommendedName>
        <fullName>Uncharacterized protein UU063</fullName>
    </recommendedName>
</protein>
<organism>
    <name type="scientific">Ureaplasma parvum serovar 3 (strain ATCC 700970)</name>
    <dbReference type="NCBI Taxonomy" id="273119"/>
    <lineage>
        <taxon>Bacteria</taxon>
        <taxon>Bacillati</taxon>
        <taxon>Mycoplasmatota</taxon>
        <taxon>Mycoplasmoidales</taxon>
        <taxon>Mycoplasmoidaceae</taxon>
        <taxon>Ureaplasma</taxon>
    </lineage>
</organism>
<name>Y063_UREPA</name>
<proteinExistence type="predicted"/>
<keyword id="KW-1185">Reference proteome</keyword>
<accession>Q9PR82</accession>
<reference key="1">
    <citation type="journal article" date="2000" name="Nature">
        <title>The complete sequence of the mucosal pathogen Ureaplasma urealyticum.</title>
        <authorList>
            <person name="Glass J.I."/>
            <person name="Lefkowitz E.J."/>
            <person name="Glass J.S."/>
            <person name="Heiner C.R."/>
            <person name="Chen E.Y."/>
            <person name="Cassell G.H."/>
        </authorList>
    </citation>
    <scope>NUCLEOTIDE SEQUENCE [LARGE SCALE GENOMIC DNA]</scope>
    <source>
        <strain>ATCC 700970</strain>
    </source>
</reference>
<sequence length="158" mass="18490">MSKKIKIYLAGPLFTLAEINDRKQQASLIRKTFKDELPNYELDLFNPIEVNDELGANAHKPNIFFYESDIKFIDQTDIAIIDIDNTDDGTMAEMGYFVALQKHVKPTLKIYILNTDWRVHKHRNEVLNKFLDGMILSHCQYFTNFTDLLNHLLIELKK</sequence>